<sequence length="513" mass="56827">MVVKRILPLPRPAGLAPPTEVPLDGQDLAMPKMVMHCIWFFLASSQPSLESTSLQELEQAFTLGMQLFLARFPAAGARTRHDKDTARWYLEYNDQGADLEVIQLDRPLQDDWKALDGKCDSVFAPRPVMIFDDDASIFSIKVTRLSCGSVAISTSTHHWLVDFVGYIDLMEELSHCVSIFLNDPNAQINIDEGATKFDWSRDLLAYSKQLEPESIPSATWFTERGSPPQMTRAPSSCHYASLLFTQESLEKLKRSLAEWALETAPTTATDRIVPSKDNWIATNDALHALLWAAITDARGLDLNATTQLHTPLDGRRLLSSLSSADSQSRGKYIGNVHPGHVFPLPSSVVSAKDRSGLFNLAWLIRTQYLNVTPGQMSAIIRHHNYTDAETFGPGRLPKCTSMFGNDVTISNVARIPVRQRLDFGEKLGKPYTLTVVGMVPVTLNGLTLDSADGTCFIIQAPAEWTSKEAVLQHQPRSGDNQAPGGMLVYVGMRSEEMDKLLQNSLLQEFALVL</sequence>
<protein>
    <recommendedName>
        <fullName evidence="5">Acyltransferase uat1</fullName>
        <ecNumber evidence="7">2.3.1.-</ecNumber>
    </recommendedName>
    <alternativeName>
        <fullName evidence="5">Ustilagic acid biosynthesis cluster protein uat1</fullName>
    </alternativeName>
</protein>
<proteinExistence type="evidence at transcript level"/>
<accession>A0A0D1CFE5</accession>
<name>UAT1_MYCMD</name>
<reference key="1">
    <citation type="journal article" date="2006" name="Nature">
        <title>Insights from the genome of the biotrophic fungal plant pathogen Ustilago maydis.</title>
        <authorList>
            <person name="Kaemper J."/>
            <person name="Kahmann R."/>
            <person name="Boelker M."/>
            <person name="Ma L.-J."/>
            <person name="Brefort T."/>
            <person name="Saville B.J."/>
            <person name="Banuett F."/>
            <person name="Kronstad J.W."/>
            <person name="Gold S.E."/>
            <person name="Mueller O."/>
            <person name="Perlin M.H."/>
            <person name="Woesten H.A.B."/>
            <person name="de Vries R."/>
            <person name="Ruiz-Herrera J."/>
            <person name="Reynaga-Pena C.G."/>
            <person name="Snetselaar K."/>
            <person name="McCann M."/>
            <person name="Perez-Martin J."/>
            <person name="Feldbruegge M."/>
            <person name="Basse C.W."/>
            <person name="Steinberg G."/>
            <person name="Ibeas J.I."/>
            <person name="Holloman W."/>
            <person name="Guzman P."/>
            <person name="Farman M.L."/>
            <person name="Stajich J.E."/>
            <person name="Sentandreu R."/>
            <person name="Gonzalez-Prieto J.M."/>
            <person name="Kennell J.C."/>
            <person name="Molina L."/>
            <person name="Schirawski J."/>
            <person name="Mendoza-Mendoza A."/>
            <person name="Greilinger D."/>
            <person name="Muench K."/>
            <person name="Roessel N."/>
            <person name="Scherer M."/>
            <person name="Vranes M."/>
            <person name="Ladendorf O."/>
            <person name="Vincon V."/>
            <person name="Fuchs U."/>
            <person name="Sandrock B."/>
            <person name="Meng S."/>
            <person name="Ho E.C.H."/>
            <person name="Cahill M.J."/>
            <person name="Boyce K.J."/>
            <person name="Klose J."/>
            <person name="Klosterman S.J."/>
            <person name="Deelstra H.J."/>
            <person name="Ortiz-Castellanos L."/>
            <person name="Li W."/>
            <person name="Sanchez-Alonso P."/>
            <person name="Schreier P.H."/>
            <person name="Haeuser-Hahn I."/>
            <person name="Vaupel M."/>
            <person name="Koopmann E."/>
            <person name="Friedrich G."/>
            <person name="Voss H."/>
            <person name="Schlueter T."/>
            <person name="Margolis J."/>
            <person name="Platt D."/>
            <person name="Swimmer C."/>
            <person name="Gnirke A."/>
            <person name="Chen F."/>
            <person name="Vysotskaia V."/>
            <person name="Mannhaupt G."/>
            <person name="Gueldener U."/>
            <person name="Muensterkoetter M."/>
            <person name="Haase D."/>
            <person name="Oesterheld M."/>
            <person name="Mewes H.-W."/>
            <person name="Mauceli E.W."/>
            <person name="DeCaprio D."/>
            <person name="Wade C.M."/>
            <person name="Butler J."/>
            <person name="Young S.K."/>
            <person name="Jaffe D.B."/>
            <person name="Calvo S.E."/>
            <person name="Nusbaum C."/>
            <person name="Galagan J.E."/>
            <person name="Birren B.W."/>
        </authorList>
    </citation>
    <scope>NUCLEOTIDE SEQUENCE [LARGE SCALE GENOMIC DNA]</scope>
    <source>
        <strain>DSM 14603 / FGSC 9021 / UM521</strain>
    </source>
</reference>
<reference key="2">
    <citation type="submission" date="2014-09" db="EMBL/GenBank/DDBJ databases">
        <authorList>
            <person name="Gueldener U."/>
            <person name="Muensterkoetter M."/>
            <person name="Walter M.C."/>
            <person name="Mannhaupt G."/>
            <person name="Kahmann R."/>
        </authorList>
    </citation>
    <scope>GENOME REANNOTATION</scope>
    <source>
        <strain>DSM 14603 / FGSC 9021 / UM521</strain>
    </source>
</reference>
<reference key="3">
    <citation type="journal article" date="2005" name="Appl. Environ. Microbiol.">
        <title>Genetic analysis of biosurfactant production in Ustilago maydis.</title>
        <authorList>
            <person name="Hewald S."/>
            <person name="Josephs K."/>
            <person name="Boelker M."/>
        </authorList>
    </citation>
    <scope>FUNCTION</scope>
</reference>
<reference key="4">
    <citation type="journal article" date="2007" name="Mol. Microbiol.">
        <title>A biosynthetic gene cluster for a secreted cellobiose lipid with antifungal activity from Ustilago maydis.</title>
        <authorList>
            <person name="Teichmann B."/>
            <person name="Linne U."/>
            <person name="Hewald S."/>
            <person name="Marahiel M.A."/>
            <person name="Boelker M."/>
        </authorList>
    </citation>
    <scope>FUNCTION</scope>
    <scope>INDUCTION</scope>
    <scope>PATHWAY</scope>
</reference>
<reference key="5">
    <citation type="journal article" date="2010" name="Appl. Environ. Microbiol.">
        <title>Activation of the ustilagic acid biosynthesis gene cluster in Ustilago maydis by the C2H2 zinc finger transcription factor Rua1.</title>
        <authorList>
            <person name="Teichmann B."/>
            <person name="Liu L."/>
            <person name="Schink K.O."/>
            <person name="Boelker M."/>
        </authorList>
    </citation>
    <scope>INDUCTION</scope>
</reference>
<organism>
    <name type="scientific">Mycosarcoma maydis</name>
    <name type="common">Corn smut fungus</name>
    <name type="synonym">Ustilago maydis</name>
    <dbReference type="NCBI Taxonomy" id="5270"/>
    <lineage>
        <taxon>Eukaryota</taxon>
        <taxon>Fungi</taxon>
        <taxon>Dikarya</taxon>
        <taxon>Basidiomycota</taxon>
        <taxon>Ustilaginomycotina</taxon>
        <taxon>Ustilaginomycetes</taxon>
        <taxon>Ustilaginales</taxon>
        <taxon>Ustilaginaceae</taxon>
        <taxon>Mycosarcoma</taxon>
    </lineage>
</organism>
<gene>
    <name evidence="5" type="primary">uat1</name>
    <name type="ORF">UMAG_06462</name>
</gene>
<keyword id="KW-0012">Acyltransferase</keyword>
<keyword id="KW-1185">Reference proteome</keyword>
<keyword id="KW-0808">Transferase</keyword>
<dbReference type="EC" id="2.3.1.-" evidence="7"/>
<dbReference type="EMBL" id="CM003162">
    <property type="protein sequence ID" value="KIS65758.1"/>
    <property type="molecule type" value="Genomic_DNA"/>
</dbReference>
<dbReference type="RefSeq" id="XP_011392730.1">
    <property type="nucleotide sequence ID" value="XM_011394428.1"/>
</dbReference>
<dbReference type="SMR" id="A0A0D1CFE5"/>
<dbReference type="STRING" id="237631.A0A0D1CFE5"/>
<dbReference type="EnsemblFungi" id="KIS65758">
    <property type="protein sequence ID" value="KIS65758"/>
    <property type="gene ID" value="UMAG_06462"/>
</dbReference>
<dbReference type="GeneID" id="23566044"/>
<dbReference type="KEGG" id="uma:UMAG_06462"/>
<dbReference type="VEuPathDB" id="FungiDB:UMAG_06462"/>
<dbReference type="eggNOG" id="ENOG502SA09">
    <property type="taxonomic scope" value="Eukaryota"/>
</dbReference>
<dbReference type="InParanoid" id="A0A0D1CFE5"/>
<dbReference type="OrthoDB" id="1862401at2759"/>
<dbReference type="Proteomes" id="UP000000561">
    <property type="component" value="Chromosome 23"/>
</dbReference>
<dbReference type="GO" id="GO:0016747">
    <property type="term" value="F:acyltransferase activity, transferring groups other than amino-acyl groups"/>
    <property type="evidence" value="ECO:0000318"/>
    <property type="project" value="GO_Central"/>
</dbReference>
<dbReference type="Gene3D" id="3.30.559.10">
    <property type="entry name" value="Chloramphenicol acetyltransferase-like domain"/>
    <property type="match status" value="2"/>
</dbReference>
<dbReference type="InterPro" id="IPR023213">
    <property type="entry name" value="CAT-like_dom_sf"/>
</dbReference>
<dbReference type="InterPro" id="IPR050317">
    <property type="entry name" value="Plant_Fungal_Acyltransferase"/>
</dbReference>
<dbReference type="PANTHER" id="PTHR31642:SF310">
    <property type="entry name" value="FATTY ALCOHOL:CAFFEOYL-COA ACYLTRANSFERASE"/>
    <property type="match status" value="1"/>
</dbReference>
<dbReference type="PANTHER" id="PTHR31642">
    <property type="entry name" value="TRICHOTHECENE 3-O-ACETYLTRANSFERASE"/>
    <property type="match status" value="1"/>
</dbReference>
<dbReference type="Pfam" id="PF02458">
    <property type="entry name" value="Transferase"/>
    <property type="match status" value="1"/>
</dbReference>
<feature type="chain" id="PRO_0000452761" description="Acyltransferase uat1">
    <location>
        <begin position="1"/>
        <end position="513"/>
    </location>
</feature>
<feature type="active site" description="Proton acceptor" evidence="1">
    <location>
        <position position="158"/>
    </location>
</feature>
<evidence type="ECO:0000250" key="1">
    <source>
        <dbReference type="UniProtKB" id="Q8W1W9"/>
    </source>
</evidence>
<evidence type="ECO:0000269" key="2">
    <source>
    </source>
</evidence>
<evidence type="ECO:0000269" key="3">
    <source>
    </source>
</evidence>
<evidence type="ECO:0000269" key="4">
    <source>
    </source>
</evidence>
<evidence type="ECO:0000303" key="5">
    <source>
    </source>
</evidence>
<evidence type="ECO:0000305" key="6"/>
<evidence type="ECO:0000305" key="7">
    <source>
    </source>
</evidence>
<comment type="function">
    <text evidence="2 3 7">Acyltransferase; part of the gene cluster that mediates the biosynthesis of the glycolipid biosurfactant ustilagic acid (UA) (PubMed:15932999, PubMed:17850255). UA is a secreted cellobiose glycolipid that is toxic for many microorganisms and confers biocontrol activity to U.maydis (PubMed:15932999, PubMed:17850255). UA consists of 15,16-dihydroxypalmitic or 2,15,16-trihydroxypalmitic acid, which is O-glycosidically linked to cellobiose at its terminal hydroxyl group (PubMed:17850255). In addition, the cellobiose moiety is acetylated and acylated with a short-chain hydroxy fatty acid (PubMed:17850255). UA biosynthesis starts with omega-hydroxylation of palmitic acid catalyzed by the cytochrome P450 monooxygenase cyp1 (PubMed:17850255). Terminal hydroxylation of palmitic acid precedes subterminal hydroxylation catalyzed by the cytochrome P450 monooxygenase cyp2 (PubMed:17850255). Sequential glucosylation of the hydroxy fatty acid is probably catalyzed by the glycosyltransferase ugt1 (Probable). The cellobiose lipid is further decorated by acetylation of the proximal glucose residue and by acylation with a short-chain beta-hydroxy fatty acid at the distal glucose residue (Probable). The acyltransferase uat1 may be a good candidate for catalyzing either acetylation or acylation of the cellobiose lipid (Probable). The fatty acid synthase fas2 may be involved in synthesis of the carbon backbone of the short-chain beta-hydroxy fatty acid esterified to the cellobiose disaccharide (Probable). The secreted UA consists of a mixture of both alpha-hydroxylated and non-hydroxylated glycolipids; therefore, alpha-hydroxylation of the long-chain fatty, catalyzed by the fatty acid hydroxylase ahd1, occurs late in UA biosynthesis and may be the last step before secretion (PubMed:17850255).</text>
</comment>
<comment type="pathway">
    <text evidence="7">Secondary metabolite biosynthesis.</text>
</comment>
<comment type="induction">
    <text evidence="3 4">Expression is strongly induced under conditions of nitrogen starvation (PubMed:17850255). Expression is positively regulated by the cluster-specific transcription factor rua1 that recognizes and binds to the specific 5'-T/G-G/T-C-G-C-A-T-A/T-C/T-C/T-G/A-3' upstream activating sequence found in all promoters of the UA biosynthesis genes (PubMed:20173069).</text>
</comment>
<comment type="similarity">
    <text evidence="6">Belongs to the plant acyltransferase family.</text>
</comment>